<comment type="function">
    <text evidence="1">Catalyzes the formation of methylglyoxal from dihydroxyacetone phosphate.</text>
</comment>
<comment type="catalytic activity">
    <reaction evidence="1">
        <text>dihydroxyacetone phosphate = methylglyoxal + phosphate</text>
        <dbReference type="Rhea" id="RHEA:17937"/>
        <dbReference type="ChEBI" id="CHEBI:17158"/>
        <dbReference type="ChEBI" id="CHEBI:43474"/>
        <dbReference type="ChEBI" id="CHEBI:57642"/>
        <dbReference type="EC" id="4.2.3.3"/>
    </reaction>
</comment>
<comment type="similarity">
    <text evidence="1">Belongs to the methylglyoxal synthase family.</text>
</comment>
<organism>
    <name type="scientific">Rhizobium rhizogenes (strain K84 / ATCC BAA-868)</name>
    <name type="common">Agrobacterium radiobacter</name>
    <dbReference type="NCBI Taxonomy" id="311403"/>
    <lineage>
        <taxon>Bacteria</taxon>
        <taxon>Pseudomonadati</taxon>
        <taxon>Pseudomonadota</taxon>
        <taxon>Alphaproteobacteria</taxon>
        <taxon>Hyphomicrobiales</taxon>
        <taxon>Rhizobiaceae</taxon>
        <taxon>Rhizobium/Agrobacterium group</taxon>
        <taxon>Rhizobium</taxon>
    </lineage>
</organism>
<evidence type="ECO:0000255" key="1">
    <source>
        <dbReference type="HAMAP-Rule" id="MF_00549"/>
    </source>
</evidence>
<dbReference type="EC" id="4.2.3.3" evidence="1"/>
<dbReference type="EMBL" id="CP000628">
    <property type="protein sequence ID" value="ACM25023.1"/>
    <property type="molecule type" value="Genomic_DNA"/>
</dbReference>
<dbReference type="RefSeq" id="WP_012650740.1">
    <property type="nucleotide sequence ID" value="NC_011985.1"/>
</dbReference>
<dbReference type="SMR" id="B9J6R7"/>
<dbReference type="STRING" id="311403.Arad_0298"/>
<dbReference type="KEGG" id="ara:Arad_0298"/>
<dbReference type="eggNOG" id="COG1803">
    <property type="taxonomic scope" value="Bacteria"/>
</dbReference>
<dbReference type="HOGENOM" id="CLU_120420_1_0_5"/>
<dbReference type="Proteomes" id="UP000001600">
    <property type="component" value="Chromosome 1"/>
</dbReference>
<dbReference type="GO" id="GO:0005829">
    <property type="term" value="C:cytosol"/>
    <property type="evidence" value="ECO:0007669"/>
    <property type="project" value="TreeGrafter"/>
</dbReference>
<dbReference type="GO" id="GO:0008929">
    <property type="term" value="F:methylglyoxal synthase activity"/>
    <property type="evidence" value="ECO:0007669"/>
    <property type="project" value="UniProtKB-UniRule"/>
</dbReference>
<dbReference type="GO" id="GO:0019242">
    <property type="term" value="P:methylglyoxal biosynthetic process"/>
    <property type="evidence" value="ECO:0007669"/>
    <property type="project" value="UniProtKB-UniRule"/>
</dbReference>
<dbReference type="CDD" id="cd01422">
    <property type="entry name" value="MGS"/>
    <property type="match status" value="1"/>
</dbReference>
<dbReference type="Gene3D" id="3.40.50.1380">
    <property type="entry name" value="Methylglyoxal synthase-like domain"/>
    <property type="match status" value="1"/>
</dbReference>
<dbReference type="HAMAP" id="MF_00549">
    <property type="entry name" value="Methylglyoxal_synth"/>
    <property type="match status" value="1"/>
</dbReference>
<dbReference type="InterPro" id="IPR004363">
    <property type="entry name" value="Methylgl_synth"/>
</dbReference>
<dbReference type="InterPro" id="IPR018148">
    <property type="entry name" value="Methylglyoxal_synth_AS"/>
</dbReference>
<dbReference type="InterPro" id="IPR011607">
    <property type="entry name" value="MGS-like_dom"/>
</dbReference>
<dbReference type="InterPro" id="IPR036914">
    <property type="entry name" value="MGS-like_dom_sf"/>
</dbReference>
<dbReference type="NCBIfam" id="TIGR00160">
    <property type="entry name" value="MGSA"/>
    <property type="match status" value="1"/>
</dbReference>
<dbReference type="NCBIfam" id="NF003559">
    <property type="entry name" value="PRK05234.1"/>
    <property type="match status" value="1"/>
</dbReference>
<dbReference type="PANTHER" id="PTHR30492">
    <property type="entry name" value="METHYLGLYOXAL SYNTHASE"/>
    <property type="match status" value="1"/>
</dbReference>
<dbReference type="PANTHER" id="PTHR30492:SF0">
    <property type="entry name" value="METHYLGLYOXAL SYNTHASE"/>
    <property type="match status" value="1"/>
</dbReference>
<dbReference type="Pfam" id="PF02142">
    <property type="entry name" value="MGS"/>
    <property type="match status" value="1"/>
</dbReference>
<dbReference type="PIRSF" id="PIRSF006614">
    <property type="entry name" value="Methylglyox_syn"/>
    <property type="match status" value="1"/>
</dbReference>
<dbReference type="SMART" id="SM00851">
    <property type="entry name" value="MGS"/>
    <property type="match status" value="1"/>
</dbReference>
<dbReference type="SUPFAM" id="SSF52335">
    <property type="entry name" value="Methylglyoxal synthase-like"/>
    <property type="match status" value="1"/>
</dbReference>
<dbReference type="PROSITE" id="PS01335">
    <property type="entry name" value="METHYLGLYOXAL_SYNTH"/>
    <property type="match status" value="1"/>
</dbReference>
<dbReference type="PROSITE" id="PS51855">
    <property type="entry name" value="MGS"/>
    <property type="match status" value="1"/>
</dbReference>
<sequence length="126" mass="13621">MAGGKCIALIAHDQKKDAMAEFARRNQDVLADWHIVATGTTGGRVLDACPDLKVTRLKSGPLGGDQQIGAMIATGDIDMLIFFIDPLTPMPHDVDVKALTRLAVLYDIPMALNEATAERLIKTLNH</sequence>
<protein>
    <recommendedName>
        <fullName evidence="1">Methylglyoxal synthase</fullName>
        <shortName evidence="1">MGS</shortName>
        <ecNumber evidence="1">4.2.3.3</ecNumber>
    </recommendedName>
</protein>
<accession>B9J6R7</accession>
<name>MGSA_RHIR8</name>
<keyword id="KW-0456">Lyase</keyword>
<feature type="chain" id="PRO_1000146614" description="Methylglyoxal synthase">
    <location>
        <begin position="1"/>
        <end position="126"/>
    </location>
</feature>
<feature type="domain" description="MGS-like" evidence="1">
    <location>
        <begin position="1"/>
        <end position="126"/>
    </location>
</feature>
<feature type="active site" description="Proton donor/acceptor" evidence="1">
    <location>
        <position position="65"/>
    </location>
</feature>
<feature type="binding site" evidence="1">
    <location>
        <position position="12"/>
    </location>
    <ligand>
        <name>substrate</name>
    </ligand>
</feature>
<feature type="binding site" evidence="1">
    <location>
        <position position="16"/>
    </location>
    <ligand>
        <name>substrate</name>
    </ligand>
</feature>
<feature type="binding site" evidence="1">
    <location>
        <begin position="38"/>
        <end position="41"/>
    </location>
    <ligand>
        <name>substrate</name>
    </ligand>
</feature>
<feature type="binding site" evidence="1">
    <location>
        <begin position="59"/>
        <end position="60"/>
    </location>
    <ligand>
        <name>substrate</name>
    </ligand>
</feature>
<feature type="binding site" evidence="1">
    <location>
        <position position="92"/>
    </location>
    <ligand>
        <name>substrate</name>
    </ligand>
</feature>
<proteinExistence type="inferred from homology"/>
<reference key="1">
    <citation type="journal article" date="2009" name="J. Bacteriol.">
        <title>Genome sequences of three Agrobacterium biovars help elucidate the evolution of multichromosome genomes in bacteria.</title>
        <authorList>
            <person name="Slater S.C."/>
            <person name="Goldman B.S."/>
            <person name="Goodner B."/>
            <person name="Setubal J.C."/>
            <person name="Farrand S.K."/>
            <person name="Nester E.W."/>
            <person name="Burr T.J."/>
            <person name="Banta L."/>
            <person name="Dickerman A.W."/>
            <person name="Paulsen I."/>
            <person name="Otten L."/>
            <person name="Suen G."/>
            <person name="Welch R."/>
            <person name="Almeida N.F."/>
            <person name="Arnold F."/>
            <person name="Burton O.T."/>
            <person name="Du Z."/>
            <person name="Ewing A."/>
            <person name="Godsy E."/>
            <person name="Heisel S."/>
            <person name="Houmiel K.L."/>
            <person name="Jhaveri J."/>
            <person name="Lu J."/>
            <person name="Miller N.M."/>
            <person name="Norton S."/>
            <person name="Chen Q."/>
            <person name="Phoolcharoen W."/>
            <person name="Ohlin V."/>
            <person name="Ondrusek D."/>
            <person name="Pride N."/>
            <person name="Stricklin S.L."/>
            <person name="Sun J."/>
            <person name="Wheeler C."/>
            <person name="Wilson L."/>
            <person name="Zhu H."/>
            <person name="Wood D.W."/>
        </authorList>
    </citation>
    <scope>NUCLEOTIDE SEQUENCE [LARGE SCALE GENOMIC DNA]</scope>
    <source>
        <strain>K84 / ATCC BAA-868</strain>
    </source>
</reference>
<gene>
    <name evidence="1" type="primary">mgsA</name>
    <name type="ordered locus">Arad_0298</name>
</gene>